<feature type="chain" id="PRO_1000094848" description="Deoxyribose-phosphate aldolase">
    <location>
        <begin position="1"/>
        <end position="218"/>
    </location>
</feature>
<feature type="active site" description="Proton donor/acceptor" evidence="1">
    <location>
        <position position="89"/>
    </location>
</feature>
<feature type="active site" description="Schiff-base intermediate with acetaldehyde" evidence="1">
    <location>
        <position position="152"/>
    </location>
</feature>
<feature type="active site" description="Proton donor/acceptor" evidence="1">
    <location>
        <position position="182"/>
    </location>
</feature>
<proteinExistence type="inferred from homology"/>
<accession>B2GG36</accession>
<evidence type="ECO:0000255" key="1">
    <source>
        <dbReference type="HAMAP-Rule" id="MF_00114"/>
    </source>
</evidence>
<gene>
    <name evidence="1" type="primary">deoC</name>
    <name type="ordered locus">KRH_18900</name>
</gene>
<dbReference type="EC" id="4.1.2.4" evidence="1"/>
<dbReference type="EMBL" id="AP009152">
    <property type="protein sequence ID" value="BAG30237.1"/>
    <property type="molecule type" value="Genomic_DNA"/>
</dbReference>
<dbReference type="RefSeq" id="WP_012398958.1">
    <property type="nucleotide sequence ID" value="NZ_VECX01000004.1"/>
</dbReference>
<dbReference type="SMR" id="B2GG36"/>
<dbReference type="STRING" id="378753.KRH_18900"/>
<dbReference type="KEGG" id="krh:KRH_18900"/>
<dbReference type="eggNOG" id="COG0274">
    <property type="taxonomic scope" value="Bacteria"/>
</dbReference>
<dbReference type="HOGENOM" id="CLU_053595_0_0_11"/>
<dbReference type="OrthoDB" id="6579831at2"/>
<dbReference type="UniPathway" id="UPA00002">
    <property type="reaction ID" value="UER00468"/>
</dbReference>
<dbReference type="Proteomes" id="UP000008838">
    <property type="component" value="Chromosome"/>
</dbReference>
<dbReference type="GO" id="GO:0005737">
    <property type="term" value="C:cytoplasm"/>
    <property type="evidence" value="ECO:0007669"/>
    <property type="project" value="UniProtKB-SubCell"/>
</dbReference>
<dbReference type="GO" id="GO:0004139">
    <property type="term" value="F:deoxyribose-phosphate aldolase activity"/>
    <property type="evidence" value="ECO:0007669"/>
    <property type="project" value="UniProtKB-UniRule"/>
</dbReference>
<dbReference type="GO" id="GO:0006018">
    <property type="term" value="P:2-deoxyribose 1-phosphate catabolic process"/>
    <property type="evidence" value="ECO:0007669"/>
    <property type="project" value="UniProtKB-UniRule"/>
</dbReference>
<dbReference type="GO" id="GO:0016052">
    <property type="term" value="P:carbohydrate catabolic process"/>
    <property type="evidence" value="ECO:0007669"/>
    <property type="project" value="TreeGrafter"/>
</dbReference>
<dbReference type="GO" id="GO:0009264">
    <property type="term" value="P:deoxyribonucleotide catabolic process"/>
    <property type="evidence" value="ECO:0007669"/>
    <property type="project" value="InterPro"/>
</dbReference>
<dbReference type="CDD" id="cd00959">
    <property type="entry name" value="DeoC"/>
    <property type="match status" value="1"/>
</dbReference>
<dbReference type="FunFam" id="3.20.20.70:FF:000044">
    <property type="entry name" value="Deoxyribose-phosphate aldolase"/>
    <property type="match status" value="1"/>
</dbReference>
<dbReference type="Gene3D" id="3.20.20.70">
    <property type="entry name" value="Aldolase class I"/>
    <property type="match status" value="1"/>
</dbReference>
<dbReference type="HAMAP" id="MF_00114">
    <property type="entry name" value="DeoC_type1"/>
    <property type="match status" value="1"/>
</dbReference>
<dbReference type="InterPro" id="IPR013785">
    <property type="entry name" value="Aldolase_TIM"/>
</dbReference>
<dbReference type="InterPro" id="IPR011343">
    <property type="entry name" value="DeoC"/>
</dbReference>
<dbReference type="InterPro" id="IPR002915">
    <property type="entry name" value="DeoC/FbaB/LacD_aldolase"/>
</dbReference>
<dbReference type="InterPro" id="IPR028581">
    <property type="entry name" value="DeoC_typeI"/>
</dbReference>
<dbReference type="NCBIfam" id="TIGR00126">
    <property type="entry name" value="deoC"/>
    <property type="match status" value="1"/>
</dbReference>
<dbReference type="PANTHER" id="PTHR10889">
    <property type="entry name" value="DEOXYRIBOSE-PHOSPHATE ALDOLASE"/>
    <property type="match status" value="1"/>
</dbReference>
<dbReference type="PANTHER" id="PTHR10889:SF1">
    <property type="entry name" value="DEOXYRIBOSE-PHOSPHATE ALDOLASE"/>
    <property type="match status" value="1"/>
</dbReference>
<dbReference type="Pfam" id="PF01791">
    <property type="entry name" value="DeoC"/>
    <property type="match status" value="1"/>
</dbReference>
<dbReference type="PIRSF" id="PIRSF001357">
    <property type="entry name" value="DeoC"/>
    <property type="match status" value="1"/>
</dbReference>
<dbReference type="SMART" id="SM01133">
    <property type="entry name" value="DeoC"/>
    <property type="match status" value="1"/>
</dbReference>
<dbReference type="SUPFAM" id="SSF51569">
    <property type="entry name" value="Aldolase"/>
    <property type="match status" value="1"/>
</dbReference>
<keyword id="KW-0963">Cytoplasm</keyword>
<keyword id="KW-0456">Lyase</keyword>
<keyword id="KW-1185">Reference proteome</keyword>
<keyword id="KW-0704">Schiff base</keyword>
<sequence length="218" mass="22302">MITRAELAAMVDHTLLKPESTAEQVAELAREAGELGTYSICVSPSRLDVELPEGVKLATVCGFPSGAHPSEVKAVEAADSVAQGADEVDMVINLGLAMDGDWDGVREDIEAVRAACPEPTVLKVIIESAALSDEQIVAACQAAEVAGADFVKTSTGFHPAGGASVEAVRLMAQTVGDRLGVKASGGIRTTEAALAMVEAGATRLGLSGTRSVLEGLDS</sequence>
<organism>
    <name type="scientific">Kocuria rhizophila (strain ATCC 9341 / DSM 348 / NBRC 103217 / DC2201)</name>
    <dbReference type="NCBI Taxonomy" id="378753"/>
    <lineage>
        <taxon>Bacteria</taxon>
        <taxon>Bacillati</taxon>
        <taxon>Actinomycetota</taxon>
        <taxon>Actinomycetes</taxon>
        <taxon>Micrococcales</taxon>
        <taxon>Micrococcaceae</taxon>
        <taxon>Kocuria</taxon>
    </lineage>
</organism>
<reference key="1">
    <citation type="journal article" date="2008" name="J. Bacteriol.">
        <title>Complete genome sequence of the soil actinomycete Kocuria rhizophila.</title>
        <authorList>
            <person name="Takarada H."/>
            <person name="Sekine M."/>
            <person name="Kosugi H."/>
            <person name="Matsuo Y."/>
            <person name="Fujisawa T."/>
            <person name="Omata S."/>
            <person name="Kishi E."/>
            <person name="Shimizu A."/>
            <person name="Tsukatani N."/>
            <person name="Tanikawa S."/>
            <person name="Fujita N."/>
            <person name="Harayama S."/>
        </authorList>
    </citation>
    <scope>NUCLEOTIDE SEQUENCE [LARGE SCALE GENOMIC DNA]</scope>
    <source>
        <strain>ATCC 9341 / DSM 348 / NBRC 103217 / DC2201</strain>
    </source>
</reference>
<name>DEOC_KOCRD</name>
<protein>
    <recommendedName>
        <fullName evidence="1">Deoxyribose-phosphate aldolase</fullName>
        <shortName evidence="1">DERA</shortName>
        <ecNumber evidence="1">4.1.2.4</ecNumber>
    </recommendedName>
    <alternativeName>
        <fullName evidence="1">2-deoxy-D-ribose 5-phosphate aldolase</fullName>
    </alternativeName>
    <alternativeName>
        <fullName evidence="1">Phosphodeoxyriboaldolase</fullName>
        <shortName evidence="1">Deoxyriboaldolase</shortName>
    </alternativeName>
</protein>
<comment type="function">
    <text evidence="1">Catalyzes a reversible aldol reaction between acetaldehyde and D-glyceraldehyde 3-phosphate to generate 2-deoxy-D-ribose 5-phosphate.</text>
</comment>
<comment type="catalytic activity">
    <reaction evidence="1">
        <text>2-deoxy-D-ribose 5-phosphate = D-glyceraldehyde 3-phosphate + acetaldehyde</text>
        <dbReference type="Rhea" id="RHEA:12821"/>
        <dbReference type="ChEBI" id="CHEBI:15343"/>
        <dbReference type="ChEBI" id="CHEBI:59776"/>
        <dbReference type="ChEBI" id="CHEBI:62877"/>
        <dbReference type="EC" id="4.1.2.4"/>
    </reaction>
</comment>
<comment type="pathway">
    <text evidence="1">Carbohydrate degradation; 2-deoxy-D-ribose 1-phosphate degradation; D-glyceraldehyde 3-phosphate and acetaldehyde from 2-deoxy-alpha-D-ribose 1-phosphate: step 2/2.</text>
</comment>
<comment type="subcellular location">
    <subcellularLocation>
        <location evidence="1">Cytoplasm</location>
    </subcellularLocation>
</comment>
<comment type="similarity">
    <text evidence="1">Belongs to the DeoC/FbaB aldolase family. DeoC type 1 subfamily.</text>
</comment>